<accession>Q7T0U6</accession>
<sequence>MLEQVQKFLLSRAACQGSDSQSRYEELFHKLDVNKDGKVDILELQEGLKAMGMEVGKGAEEKIVAAGDTNKDGHLDFGEFIRYLEEHEKKMKIAFTSLDKNKDGKIESAEIMNSLKVLGIKISLDHADKILKSMDSDGTLTVDWNEWRDHFLFNPADNIQQIIRYWKHSTVLDIGDSLTIPDEFTEEEKKTGQWWKQLMAGGMAGAVSRTGTAPLDRLKVMMQVHGSKGNSNIITGLKQMVKEGGIRSLWRGNGVNVIKIAPETAMKFWAYEQYKKLFTSESGKLGTAERFVAGSLAGATAQTSIYPMEVLKTRLAVGRTGQYSGMFDCAKKIMQKEGIRAFYKGYIPNILGIIPYAGIDLAIYETLKNYWLQNHAKDSANPGVLVLLGCGTASSTCGQLASYPLALIRTRMQAQASIEGAPQLNMGGLFRKIVAKEGFLGLYRGIGPNFLKVLPAVSISYVVYEKMKVQLGI</sequence>
<reference key="1">
    <citation type="submission" date="2003-08" db="EMBL/GenBank/DDBJ databases">
        <authorList>
            <consortium name="NIH - Xenopus Gene Collection (XGC) project"/>
        </authorList>
    </citation>
    <scope>NUCLEOTIDE SEQUENCE [LARGE SCALE MRNA]</scope>
    <source>
        <tissue>Spleen</tissue>
    </source>
</reference>
<gene>
    <name type="primary">slc25a24-b</name>
    <name type="synonym">scamc1-b</name>
</gene>
<comment type="function">
    <text evidence="1">Electroneutral antiporter that mediates the transport of adenyl nucleotides through the inner mitochondrial membrane. Originally identified as an ATP-magnesium/inorganic phosphate antiporter, it also acts as a broad specificity adenyl nucleotide antiporter. By regulating the mitochondrial matrix adenyl nucleotide pool could adapt to changing cellular energetic demands and indirectly regulate adenyl nucleotide-dependent metabolic pathways.</text>
</comment>
<comment type="catalytic activity">
    <reaction evidence="1">
        <text>Mg(2+)(out) + phosphate(in) + ATP(out) = Mg(2+)(in) + phosphate(out) + ATP(in)</text>
        <dbReference type="Rhea" id="RHEA:65840"/>
        <dbReference type="ChEBI" id="CHEBI:18420"/>
        <dbReference type="ChEBI" id="CHEBI:30616"/>
        <dbReference type="ChEBI" id="CHEBI:43474"/>
    </reaction>
</comment>
<comment type="catalytic activity">
    <reaction evidence="1">
        <text>ADP(out) + phosphate(in) + H(+)(out) = ADP(in) + phosphate(out) + H(+)(in)</text>
        <dbReference type="Rhea" id="RHEA:65844"/>
        <dbReference type="ChEBI" id="CHEBI:15378"/>
        <dbReference type="ChEBI" id="CHEBI:43474"/>
        <dbReference type="ChEBI" id="CHEBI:456216"/>
    </reaction>
</comment>
<comment type="catalytic activity">
    <reaction evidence="1">
        <text>AMP(out) + phosphate(in) = AMP(in) + phosphate(out)</text>
        <dbReference type="Rhea" id="RHEA:70259"/>
        <dbReference type="ChEBI" id="CHEBI:43474"/>
        <dbReference type="ChEBI" id="CHEBI:456215"/>
    </reaction>
</comment>
<comment type="catalytic activity">
    <reaction evidence="1">
        <text>phosphate(in) + ATP(out) + 2 H(+)(out) = phosphate(out) + ATP(in) + 2 H(+)(in)</text>
        <dbReference type="Rhea" id="RHEA:72035"/>
        <dbReference type="ChEBI" id="CHEBI:15378"/>
        <dbReference type="ChEBI" id="CHEBI:30616"/>
        <dbReference type="ChEBI" id="CHEBI:43474"/>
    </reaction>
</comment>
<comment type="catalytic activity">
    <reaction evidence="1">
        <text>dADP(in) + ADP(out) = dADP(out) + ADP(in)</text>
        <dbReference type="Rhea" id="RHEA:72855"/>
        <dbReference type="ChEBI" id="CHEBI:57667"/>
        <dbReference type="ChEBI" id="CHEBI:456216"/>
    </reaction>
</comment>
<comment type="catalytic activity">
    <reaction evidence="1">
        <text>Mg(2+)(in) + ADP(out) + ATP(in) + H(+)(out) = Mg(2+)(out) + ADP(in) + ATP(out) + H(+)(in)</text>
        <dbReference type="Rhea" id="RHEA:73659"/>
        <dbReference type="ChEBI" id="CHEBI:15378"/>
        <dbReference type="ChEBI" id="CHEBI:18420"/>
        <dbReference type="ChEBI" id="CHEBI:30616"/>
        <dbReference type="ChEBI" id="CHEBI:456216"/>
    </reaction>
</comment>
<comment type="catalytic activity">
    <reaction evidence="1">
        <text>ADP(out) + diphosphate(in) = ADP(in) + diphosphate(out)</text>
        <dbReference type="Rhea" id="RHEA:73671"/>
        <dbReference type="ChEBI" id="CHEBI:33019"/>
        <dbReference type="ChEBI" id="CHEBI:456216"/>
    </reaction>
</comment>
<comment type="catalytic activity">
    <reaction evidence="1">
        <text>dAMP(in) + ADP(out) + H(+)(out) = dAMP(out) + ADP(in) + H(+)(in)</text>
        <dbReference type="Rhea" id="RHEA:73675"/>
        <dbReference type="ChEBI" id="CHEBI:15378"/>
        <dbReference type="ChEBI" id="CHEBI:58245"/>
        <dbReference type="ChEBI" id="CHEBI:456216"/>
    </reaction>
</comment>
<comment type="catalytic activity">
    <reaction evidence="1">
        <text>3'-AMP(in) + ADP(out) + H(+)(out) = 3'-AMP(out) + ADP(in) + H(+)(in)</text>
        <dbReference type="Rhea" id="RHEA:73679"/>
        <dbReference type="ChEBI" id="CHEBI:15378"/>
        <dbReference type="ChEBI" id="CHEBI:60880"/>
        <dbReference type="ChEBI" id="CHEBI:456216"/>
    </reaction>
</comment>
<comment type="catalytic activity">
    <reaction evidence="1">
        <text>dAMP(out) + phosphate(in) = dAMP(in) + phosphate(out)</text>
        <dbReference type="Rhea" id="RHEA:73687"/>
        <dbReference type="ChEBI" id="CHEBI:43474"/>
        <dbReference type="ChEBI" id="CHEBI:58245"/>
    </reaction>
</comment>
<comment type="catalytic activity">
    <reaction evidence="1">
        <text>3'-AMP(out) + phosphate(in) = 3'-AMP(in) + phosphate(out)</text>
        <dbReference type="Rhea" id="RHEA:73691"/>
        <dbReference type="ChEBI" id="CHEBI:43474"/>
        <dbReference type="ChEBI" id="CHEBI:60880"/>
    </reaction>
</comment>
<comment type="catalytic activity">
    <reaction evidence="1">
        <text>dADP(out) + phosphate(in) + H(+)(out) = dADP(in) + phosphate(out) + H(+)(in)</text>
        <dbReference type="Rhea" id="RHEA:73695"/>
        <dbReference type="ChEBI" id="CHEBI:15378"/>
        <dbReference type="ChEBI" id="CHEBI:43474"/>
        <dbReference type="ChEBI" id="CHEBI:57667"/>
    </reaction>
</comment>
<comment type="activity regulation">
    <text evidence="1">Activated by an increase in cytosolic calcium levels that induce a conformational change of the N-terminal regulatory domain, uncapping the channel and allowing transport. Inhibited by bathophenanthroline, mersalyl, p-hydroxymercuribenzoate, bromcresol purple and tannic acid.</text>
</comment>
<comment type="subunit">
    <text evidence="1">Monomer.</text>
</comment>
<comment type="subcellular location">
    <subcellularLocation>
        <location evidence="1">Mitochondrion inner membrane</location>
        <topology evidence="2">Multi-pass membrane protein</topology>
    </subcellularLocation>
</comment>
<comment type="domain">
    <text evidence="1">The regulatory N-terminal domain/NTD formed of two pairs of fused calcium-binding EF-hands, binds calcium in the mitochondrial intermembrane space and regulates the antiporter activity of the transmembrane domain/TMD. In absence of calcium, the apo form of the N-terminal domain is intrinsically disordered and binds to the transmembrane domain, inhibiting the transporter activity. Binding of calcium leads to a major conformational change and abolishes the interaction with the transmembrane domain and the inhibition of the transporter activity.</text>
</comment>
<comment type="domain">
    <text evidence="1">The C-terminal mitochondrial carrier domain/transmembrane domain/TMD bears the transmembrane transporter activity.</text>
</comment>
<comment type="domain">
    <text evidence="1">Linker region/H9 could directly block the transport of substrates across the transporter.</text>
</comment>
<comment type="similarity">
    <text evidence="5">Belongs to the mitochondrial carrier (TC 2.A.29) family.</text>
</comment>
<proteinExistence type="evidence at transcript level"/>
<evidence type="ECO:0000250" key="1">
    <source>
        <dbReference type="UniProtKB" id="Q6NUK1"/>
    </source>
</evidence>
<evidence type="ECO:0000255" key="2"/>
<evidence type="ECO:0000255" key="3">
    <source>
        <dbReference type="PROSITE-ProRule" id="PRU00282"/>
    </source>
</evidence>
<evidence type="ECO:0000255" key="4">
    <source>
        <dbReference type="PROSITE-ProRule" id="PRU00448"/>
    </source>
</evidence>
<evidence type="ECO:0000305" key="5"/>
<protein>
    <recommendedName>
        <fullName evidence="1">Mitochondrial adenyl nucleotide antiporter SLC25A24-B</fullName>
    </recommendedName>
    <alternativeName>
        <fullName evidence="1">Small calcium-binding mitochondrial carrier protein 1-B</fullName>
        <shortName evidence="1">SCaMC-1-A</shortName>
    </alternativeName>
    <alternativeName>
        <fullName>Solute carrier family 25 member 24-B</fullName>
    </alternativeName>
</protein>
<dbReference type="EMBL" id="BC056033">
    <property type="protein sequence ID" value="AAH56033.1"/>
    <property type="molecule type" value="mRNA"/>
</dbReference>
<dbReference type="RefSeq" id="NP_001079858.1">
    <property type="nucleotide sequence ID" value="NM_001086389.1"/>
</dbReference>
<dbReference type="RefSeq" id="XP_018114842.1">
    <property type="nucleotide sequence ID" value="XM_018259353.1"/>
</dbReference>
<dbReference type="SMR" id="Q7T0U6"/>
<dbReference type="DNASU" id="379548"/>
<dbReference type="GeneID" id="379548"/>
<dbReference type="KEGG" id="xla:379548"/>
<dbReference type="AGR" id="Xenbase:XB-GENE-6255476"/>
<dbReference type="CTD" id="379548"/>
<dbReference type="Xenbase" id="XB-GENE-6255476">
    <property type="gene designation" value="slc25a24.S"/>
</dbReference>
<dbReference type="OMA" id="SGQWWKQ"/>
<dbReference type="OrthoDB" id="270584at2759"/>
<dbReference type="Proteomes" id="UP000186698">
    <property type="component" value="Chromosome 4S"/>
</dbReference>
<dbReference type="Bgee" id="379548">
    <property type="expression patterns" value="Expressed in muscle tissue and 18 other cell types or tissues"/>
</dbReference>
<dbReference type="GO" id="GO:0016020">
    <property type="term" value="C:membrane"/>
    <property type="evidence" value="ECO:0000250"/>
    <property type="project" value="UniProtKB"/>
</dbReference>
<dbReference type="GO" id="GO:0005743">
    <property type="term" value="C:mitochondrial inner membrane"/>
    <property type="evidence" value="ECO:0007669"/>
    <property type="project" value="UniProtKB-SubCell"/>
</dbReference>
<dbReference type="GO" id="GO:0005739">
    <property type="term" value="C:mitochondrion"/>
    <property type="evidence" value="ECO:0000250"/>
    <property type="project" value="UniProtKB"/>
</dbReference>
<dbReference type="GO" id="GO:0000295">
    <property type="term" value="F:adenine nucleotide transmembrane transporter activity"/>
    <property type="evidence" value="ECO:0000250"/>
    <property type="project" value="UniProtKB"/>
</dbReference>
<dbReference type="GO" id="GO:0140988">
    <property type="term" value="F:ADP:phosphate antiporter activity"/>
    <property type="evidence" value="ECO:0000250"/>
    <property type="project" value="UniProtKB"/>
</dbReference>
<dbReference type="GO" id="GO:0005347">
    <property type="term" value="F:ATP transmembrane transporter activity"/>
    <property type="evidence" value="ECO:0000318"/>
    <property type="project" value="GO_Central"/>
</dbReference>
<dbReference type="GO" id="GO:0140987">
    <property type="term" value="F:ATP:phosphate antiporter activity"/>
    <property type="evidence" value="ECO:0000250"/>
    <property type="project" value="UniProtKB"/>
</dbReference>
<dbReference type="GO" id="GO:0005509">
    <property type="term" value="F:calcium ion binding"/>
    <property type="evidence" value="ECO:0000250"/>
    <property type="project" value="UniProtKB"/>
</dbReference>
<dbReference type="GO" id="GO:0051503">
    <property type="term" value="P:adenine nucleotide transport"/>
    <property type="evidence" value="ECO:0000250"/>
    <property type="project" value="UniProtKB"/>
</dbReference>
<dbReference type="GO" id="GO:0015866">
    <property type="term" value="P:ADP transport"/>
    <property type="evidence" value="ECO:0000318"/>
    <property type="project" value="GO_Central"/>
</dbReference>
<dbReference type="GO" id="GO:0015867">
    <property type="term" value="P:ATP transport"/>
    <property type="evidence" value="ECO:0000318"/>
    <property type="project" value="GO_Central"/>
</dbReference>
<dbReference type="GO" id="GO:0071277">
    <property type="term" value="P:cellular response to calcium ion"/>
    <property type="evidence" value="ECO:0000250"/>
    <property type="project" value="UniProtKB"/>
</dbReference>
<dbReference type="GO" id="GO:1990544">
    <property type="term" value="P:mitochondrial ATP transmembrane transport"/>
    <property type="evidence" value="ECO:0000250"/>
    <property type="project" value="UniProtKB"/>
</dbReference>
<dbReference type="FunFam" id="1.10.238.10:FF:000028">
    <property type="entry name" value="Putative calcium-binding mitochondrial carrier protein scamc-2"/>
    <property type="match status" value="1"/>
</dbReference>
<dbReference type="FunFam" id="1.50.40.10:FF:000003">
    <property type="entry name" value="Putative calcium-binding mitochondrial carrier protein scamc-2"/>
    <property type="match status" value="1"/>
</dbReference>
<dbReference type="FunFam" id="1.10.238.10:FF:000168">
    <property type="entry name" value="Solute carrier family 25 member 24"/>
    <property type="match status" value="1"/>
</dbReference>
<dbReference type="Gene3D" id="1.10.238.10">
    <property type="entry name" value="EF-hand"/>
    <property type="match status" value="2"/>
</dbReference>
<dbReference type="Gene3D" id="1.50.40.10">
    <property type="entry name" value="Mitochondrial carrier domain"/>
    <property type="match status" value="1"/>
</dbReference>
<dbReference type="InterPro" id="IPR011992">
    <property type="entry name" value="EF-hand-dom_pair"/>
</dbReference>
<dbReference type="InterPro" id="IPR018247">
    <property type="entry name" value="EF_Hand_1_Ca_BS"/>
</dbReference>
<dbReference type="InterPro" id="IPR002048">
    <property type="entry name" value="EF_hand_dom"/>
</dbReference>
<dbReference type="InterPro" id="IPR002167">
    <property type="entry name" value="GDC-like"/>
</dbReference>
<dbReference type="InterPro" id="IPR002067">
    <property type="entry name" value="Mit_carrier"/>
</dbReference>
<dbReference type="InterPro" id="IPR018108">
    <property type="entry name" value="Mitochondrial_sb/sol_carrier"/>
</dbReference>
<dbReference type="InterPro" id="IPR023395">
    <property type="entry name" value="Mt_carrier_dom_sf"/>
</dbReference>
<dbReference type="PANTHER" id="PTHR24089">
    <property type="entry name" value="SOLUTE CARRIER FAMILY 25"/>
    <property type="match status" value="1"/>
</dbReference>
<dbReference type="Pfam" id="PF13499">
    <property type="entry name" value="EF-hand_7"/>
    <property type="match status" value="2"/>
</dbReference>
<dbReference type="Pfam" id="PF00153">
    <property type="entry name" value="Mito_carr"/>
    <property type="match status" value="3"/>
</dbReference>
<dbReference type="PRINTS" id="PR00928">
    <property type="entry name" value="GRAVESDC"/>
</dbReference>
<dbReference type="PRINTS" id="PR00926">
    <property type="entry name" value="MITOCARRIER"/>
</dbReference>
<dbReference type="SMART" id="SM00054">
    <property type="entry name" value="EFh"/>
    <property type="match status" value="3"/>
</dbReference>
<dbReference type="SUPFAM" id="SSF47473">
    <property type="entry name" value="EF-hand"/>
    <property type="match status" value="1"/>
</dbReference>
<dbReference type="SUPFAM" id="SSF103506">
    <property type="entry name" value="Mitochondrial carrier"/>
    <property type="match status" value="1"/>
</dbReference>
<dbReference type="PROSITE" id="PS00018">
    <property type="entry name" value="EF_HAND_1"/>
    <property type="match status" value="3"/>
</dbReference>
<dbReference type="PROSITE" id="PS50222">
    <property type="entry name" value="EF_HAND_2"/>
    <property type="match status" value="4"/>
</dbReference>
<dbReference type="PROSITE" id="PS50920">
    <property type="entry name" value="SOLCAR"/>
    <property type="match status" value="3"/>
</dbReference>
<feature type="chain" id="PRO_0000317599" description="Mitochondrial adenyl nucleotide antiporter SLC25A24-B">
    <location>
        <begin position="1"/>
        <end position="473"/>
    </location>
</feature>
<feature type="topological domain" description="Mitochondrial intermembrane" evidence="1">
    <location>
        <begin position="1"/>
        <end position="197"/>
    </location>
</feature>
<feature type="transmembrane region" description="Helical; Name=1" evidence="2">
    <location>
        <begin position="198"/>
        <end position="215"/>
    </location>
</feature>
<feature type="topological domain" description="Mitochondrial matrix" evidence="1">
    <location>
        <begin position="216"/>
        <end position="251"/>
    </location>
</feature>
<feature type="transmembrane region" description="Helical; Name=2" evidence="2">
    <location>
        <begin position="252"/>
        <end position="271"/>
    </location>
</feature>
<feature type="topological domain" description="Mitochondrial intermembrane" evidence="1">
    <location>
        <begin position="272"/>
        <end position="294"/>
    </location>
</feature>
<feature type="transmembrane region" description="Helical; Name=3" evidence="2">
    <location>
        <begin position="295"/>
        <end position="308"/>
    </location>
</feature>
<feature type="topological domain" description="Mitochondrial matrix" evidence="1">
    <location>
        <begin position="309"/>
        <end position="344"/>
    </location>
</feature>
<feature type="transmembrane region" description="Helical; Name=4" evidence="2">
    <location>
        <begin position="345"/>
        <end position="364"/>
    </location>
</feature>
<feature type="topological domain" description="Mitochondrial intermembrane" evidence="1">
    <location>
        <begin position="365"/>
        <end position="387"/>
    </location>
</feature>
<feature type="transmembrane region" description="Helical; Name=5" evidence="2">
    <location>
        <begin position="388"/>
        <end position="405"/>
    </location>
</feature>
<feature type="topological domain" description="Mitochondrial matrix" evidence="1">
    <location>
        <begin position="406"/>
        <end position="444"/>
    </location>
</feature>
<feature type="transmembrane region" description="Helical; Name=6" evidence="2">
    <location>
        <begin position="445"/>
        <end position="464"/>
    </location>
</feature>
<feature type="topological domain" description="Mitochondrial intermembrane" evidence="1">
    <location>
        <begin position="465"/>
        <end position="473"/>
    </location>
</feature>
<feature type="domain" description="EF-hand 1" evidence="4">
    <location>
        <begin position="19"/>
        <end position="54"/>
    </location>
</feature>
<feature type="domain" description="EF-hand 2" evidence="4">
    <location>
        <begin position="55"/>
        <end position="88"/>
    </location>
</feature>
<feature type="domain" description="EF-hand 3" evidence="4">
    <location>
        <begin position="86"/>
        <end position="121"/>
    </location>
</feature>
<feature type="domain" description="EF-hand 4" evidence="4">
    <location>
        <begin position="122"/>
        <end position="157"/>
    </location>
</feature>
<feature type="repeat" description="Solcar 1" evidence="3">
    <location>
        <begin position="192"/>
        <end position="277"/>
    </location>
</feature>
<feature type="repeat" description="Solcar 2" evidence="3">
    <location>
        <begin position="285"/>
        <end position="370"/>
    </location>
</feature>
<feature type="repeat" description="Solcar 3" evidence="3">
    <location>
        <begin position="382"/>
        <end position="470"/>
    </location>
</feature>
<feature type="region of interest" description="Regulatory N-terminal domain" evidence="1">
    <location>
        <begin position="1"/>
        <end position="173"/>
    </location>
</feature>
<feature type="region of interest" description="Linker region" evidence="1">
    <location>
        <begin position="159"/>
        <end position="168"/>
    </location>
</feature>
<feature type="region of interest" description="C-terminal transmembrane transporter domain" evidence="1">
    <location>
        <begin position="174"/>
        <end position="473"/>
    </location>
</feature>
<feature type="binding site" evidence="4">
    <location>
        <position position="32"/>
    </location>
    <ligand>
        <name>Ca(2+)</name>
        <dbReference type="ChEBI" id="CHEBI:29108"/>
        <label>1</label>
    </ligand>
</feature>
<feature type="binding site" evidence="4">
    <location>
        <position position="34"/>
    </location>
    <ligand>
        <name>Ca(2+)</name>
        <dbReference type="ChEBI" id="CHEBI:29108"/>
        <label>1</label>
    </ligand>
</feature>
<feature type="binding site" evidence="4">
    <location>
        <position position="36"/>
    </location>
    <ligand>
        <name>Ca(2+)</name>
        <dbReference type="ChEBI" id="CHEBI:29108"/>
        <label>1</label>
    </ligand>
</feature>
<feature type="binding site" evidence="4">
    <location>
        <position position="38"/>
    </location>
    <ligand>
        <name>Ca(2+)</name>
        <dbReference type="ChEBI" id="CHEBI:29108"/>
        <label>1</label>
    </ligand>
</feature>
<feature type="binding site" evidence="4">
    <location>
        <position position="43"/>
    </location>
    <ligand>
        <name>Ca(2+)</name>
        <dbReference type="ChEBI" id="CHEBI:29108"/>
        <label>1</label>
    </ligand>
</feature>
<feature type="binding site" evidence="4">
    <location>
        <position position="68"/>
    </location>
    <ligand>
        <name>Ca(2+)</name>
        <dbReference type="ChEBI" id="CHEBI:29108"/>
        <label>2</label>
    </ligand>
</feature>
<feature type="binding site" evidence="4">
    <location>
        <position position="70"/>
    </location>
    <ligand>
        <name>Ca(2+)</name>
        <dbReference type="ChEBI" id="CHEBI:29108"/>
        <label>2</label>
    </ligand>
</feature>
<feature type="binding site" evidence="4">
    <location>
        <position position="72"/>
    </location>
    <ligand>
        <name>Ca(2+)</name>
        <dbReference type="ChEBI" id="CHEBI:29108"/>
        <label>2</label>
    </ligand>
</feature>
<feature type="binding site" evidence="4">
    <location>
        <position position="74"/>
    </location>
    <ligand>
        <name>Ca(2+)</name>
        <dbReference type="ChEBI" id="CHEBI:29108"/>
        <label>2</label>
    </ligand>
</feature>
<feature type="binding site" evidence="4">
    <location>
        <position position="79"/>
    </location>
    <ligand>
        <name>Ca(2+)</name>
        <dbReference type="ChEBI" id="CHEBI:29108"/>
        <label>2</label>
    </ligand>
</feature>
<feature type="binding site" evidence="4">
    <location>
        <position position="99"/>
    </location>
    <ligand>
        <name>Ca(2+)</name>
        <dbReference type="ChEBI" id="CHEBI:29108"/>
        <label>3</label>
    </ligand>
</feature>
<feature type="binding site" evidence="4">
    <location>
        <position position="101"/>
    </location>
    <ligand>
        <name>Ca(2+)</name>
        <dbReference type="ChEBI" id="CHEBI:29108"/>
        <label>3</label>
    </ligand>
</feature>
<feature type="binding site" evidence="4">
    <location>
        <position position="103"/>
    </location>
    <ligand>
        <name>Ca(2+)</name>
        <dbReference type="ChEBI" id="CHEBI:29108"/>
        <label>3</label>
    </ligand>
</feature>
<feature type="binding site" evidence="4">
    <location>
        <position position="105"/>
    </location>
    <ligand>
        <name>Ca(2+)</name>
        <dbReference type="ChEBI" id="CHEBI:29108"/>
        <label>3</label>
    </ligand>
</feature>
<feature type="binding site" evidence="4">
    <location>
        <position position="110"/>
    </location>
    <ligand>
        <name>Ca(2+)</name>
        <dbReference type="ChEBI" id="CHEBI:29108"/>
        <label>3</label>
    </ligand>
</feature>
<feature type="binding site" evidence="5">
    <location>
        <position position="135"/>
    </location>
    <ligand>
        <name>Ca(2+)</name>
        <dbReference type="ChEBI" id="CHEBI:29108"/>
        <label>4</label>
    </ligand>
</feature>
<feature type="binding site" evidence="5">
    <location>
        <position position="137"/>
    </location>
    <ligand>
        <name>Ca(2+)</name>
        <dbReference type="ChEBI" id="CHEBI:29108"/>
        <label>4</label>
    </ligand>
</feature>
<feature type="binding site" evidence="5">
    <location>
        <position position="139"/>
    </location>
    <ligand>
        <name>Ca(2+)</name>
        <dbReference type="ChEBI" id="CHEBI:29108"/>
        <label>4</label>
    </ligand>
</feature>
<feature type="binding site" evidence="5">
    <location>
        <position position="141"/>
    </location>
    <ligand>
        <name>Ca(2+)</name>
        <dbReference type="ChEBI" id="CHEBI:29108"/>
        <label>4</label>
    </ligand>
</feature>
<feature type="binding site" evidence="5">
    <location>
        <position position="146"/>
    </location>
    <ligand>
        <name>Ca(2+)</name>
        <dbReference type="ChEBI" id="CHEBI:29108"/>
        <label>4</label>
    </ligand>
</feature>
<organism>
    <name type="scientific">Xenopus laevis</name>
    <name type="common">African clawed frog</name>
    <dbReference type="NCBI Taxonomy" id="8355"/>
    <lineage>
        <taxon>Eukaryota</taxon>
        <taxon>Metazoa</taxon>
        <taxon>Chordata</taxon>
        <taxon>Craniata</taxon>
        <taxon>Vertebrata</taxon>
        <taxon>Euteleostomi</taxon>
        <taxon>Amphibia</taxon>
        <taxon>Batrachia</taxon>
        <taxon>Anura</taxon>
        <taxon>Pipoidea</taxon>
        <taxon>Pipidae</taxon>
        <taxon>Xenopodinae</taxon>
        <taxon>Xenopus</taxon>
        <taxon>Xenopus</taxon>
    </lineage>
</organism>
<name>SCM1B_XENLA</name>
<keyword id="KW-0050">Antiport</keyword>
<keyword id="KW-0106">Calcium</keyword>
<keyword id="KW-0472">Membrane</keyword>
<keyword id="KW-0479">Metal-binding</keyword>
<keyword id="KW-0496">Mitochondrion</keyword>
<keyword id="KW-0999">Mitochondrion inner membrane</keyword>
<keyword id="KW-1185">Reference proteome</keyword>
<keyword id="KW-0677">Repeat</keyword>
<keyword id="KW-0812">Transmembrane</keyword>
<keyword id="KW-1133">Transmembrane helix</keyword>
<keyword id="KW-0813">Transport</keyword>